<keyword id="KW-0460">Magnesium</keyword>
<keyword id="KW-0464">Manganese</keyword>
<keyword id="KW-0474">Menaquinone biosynthesis</keyword>
<keyword id="KW-0479">Metal-binding</keyword>
<keyword id="KW-0786">Thiamine pyrophosphate</keyword>
<keyword id="KW-0808">Transferase</keyword>
<sequence>MNNHIEALSYYLGAFVDELTRLNVCDVVISPGSRSTPIALLMEQHEGMNTYLHVDERSAGFFALGIAKAKKRPVALLCTSGTAAANYYPAVCEAFHSRVPLIVLTADRPHELRDVGAPQAMNQINLYGTFVKQFTEMALPEASEAMYHYARMTTQRMIASACLAPQGPVHLNFPVREPLIPDFSLESLWDKGRGEYTGVVQQGNAVMPSEYVDSLVGRLSHMEKGLIICGDDSHSEIATFATQLAEKTGYPILADPLSNIRSGHHDKTMVIDCYDTFLRNELLKETWKPDVLIRFGGMPVSKALTQFIKKQTKAVHIVVDESGQWRDPALVATEVVQASDIAFCSALIEKMPVMKKNDWFRMWQHINEKTKETLREMETYDTAFEGRVITDIVRVLPEGATLFASNSMPIRDTDSFFFTSDKNIQVMANRGVNGIDGIISTALGASMICDPLVLVIGDLSFYHDLNGLLAAKLHELNITIVVVNNDGGGIFSFLPQYEKKEHFESLFGTPIGLDYEHVVTMYGGSFSRVNGWEQFREEVQKGATTEGLHVVEICTNRDENLTLHRKLWAKTQDVITTSLQGESK</sequence>
<accession>A0RK76</accession>
<reference key="1">
    <citation type="journal article" date="2007" name="J. Bacteriol.">
        <title>The complete genome sequence of Bacillus thuringiensis Al Hakam.</title>
        <authorList>
            <person name="Challacombe J.F."/>
            <person name="Altherr M.R."/>
            <person name="Xie G."/>
            <person name="Bhotika S.S."/>
            <person name="Brown N."/>
            <person name="Bruce D."/>
            <person name="Campbell C.S."/>
            <person name="Campbell M.L."/>
            <person name="Chen J."/>
            <person name="Chertkov O."/>
            <person name="Cleland C."/>
            <person name="Dimitrijevic M."/>
            <person name="Doggett N.A."/>
            <person name="Fawcett J.J."/>
            <person name="Glavina T."/>
            <person name="Goodwin L.A."/>
            <person name="Green L.D."/>
            <person name="Han C.S."/>
            <person name="Hill K.K."/>
            <person name="Hitchcock P."/>
            <person name="Jackson P.J."/>
            <person name="Keim P."/>
            <person name="Kewalramani A.R."/>
            <person name="Longmire J."/>
            <person name="Lucas S."/>
            <person name="Malfatti S."/>
            <person name="Martinez D."/>
            <person name="McMurry K."/>
            <person name="Meincke L.J."/>
            <person name="Misra M."/>
            <person name="Moseman B.L."/>
            <person name="Mundt M."/>
            <person name="Munk A.C."/>
            <person name="Okinaka R.T."/>
            <person name="Parson-Quintana B."/>
            <person name="Reilly L.P."/>
            <person name="Richardson P."/>
            <person name="Robinson D.L."/>
            <person name="Saunders E."/>
            <person name="Tapia R."/>
            <person name="Tesmer J.G."/>
            <person name="Thayer N."/>
            <person name="Thompson L.S."/>
            <person name="Tice H."/>
            <person name="Ticknor L.O."/>
            <person name="Wills P.L."/>
            <person name="Gilna P."/>
            <person name="Brettin T.S."/>
        </authorList>
    </citation>
    <scope>NUCLEOTIDE SEQUENCE [LARGE SCALE GENOMIC DNA]</scope>
    <source>
        <strain>Al Hakam</strain>
    </source>
</reference>
<feature type="chain" id="PRO_0000341711" description="2-succinyl-5-enolpyruvyl-6-hydroxy-3-cyclohexene-1-carboxylate synthase">
    <location>
        <begin position="1"/>
        <end position="584"/>
    </location>
</feature>
<dbReference type="EC" id="2.2.1.9" evidence="1"/>
<dbReference type="EMBL" id="CP000485">
    <property type="protein sequence ID" value="ABK87619.1"/>
    <property type="molecule type" value="Genomic_DNA"/>
</dbReference>
<dbReference type="RefSeq" id="WP_001059246.1">
    <property type="nucleotide sequence ID" value="NC_008600.1"/>
</dbReference>
<dbReference type="SMR" id="A0RK76"/>
<dbReference type="KEGG" id="btl:BALH_4421"/>
<dbReference type="HOGENOM" id="CLU_006051_3_0_9"/>
<dbReference type="UniPathway" id="UPA00079"/>
<dbReference type="UniPathway" id="UPA01057">
    <property type="reaction ID" value="UER00164"/>
</dbReference>
<dbReference type="GO" id="GO:0070204">
    <property type="term" value="F:2-succinyl-5-enolpyruvyl-6-hydroxy-3-cyclohexene-1-carboxylic-acid synthase activity"/>
    <property type="evidence" value="ECO:0007669"/>
    <property type="project" value="UniProtKB-UniRule"/>
</dbReference>
<dbReference type="GO" id="GO:0000287">
    <property type="term" value="F:magnesium ion binding"/>
    <property type="evidence" value="ECO:0007669"/>
    <property type="project" value="UniProtKB-UniRule"/>
</dbReference>
<dbReference type="GO" id="GO:0030145">
    <property type="term" value="F:manganese ion binding"/>
    <property type="evidence" value="ECO:0007669"/>
    <property type="project" value="UniProtKB-UniRule"/>
</dbReference>
<dbReference type="GO" id="GO:0030976">
    <property type="term" value="F:thiamine pyrophosphate binding"/>
    <property type="evidence" value="ECO:0007669"/>
    <property type="project" value="UniProtKB-UniRule"/>
</dbReference>
<dbReference type="GO" id="GO:0009234">
    <property type="term" value="P:menaquinone biosynthetic process"/>
    <property type="evidence" value="ECO:0007669"/>
    <property type="project" value="UniProtKB-UniRule"/>
</dbReference>
<dbReference type="CDD" id="cd07037">
    <property type="entry name" value="TPP_PYR_MenD"/>
    <property type="match status" value="1"/>
</dbReference>
<dbReference type="CDD" id="cd02009">
    <property type="entry name" value="TPP_SHCHC_synthase"/>
    <property type="match status" value="1"/>
</dbReference>
<dbReference type="Gene3D" id="3.40.50.970">
    <property type="match status" value="2"/>
</dbReference>
<dbReference type="Gene3D" id="3.40.50.1220">
    <property type="entry name" value="TPP-binding domain"/>
    <property type="match status" value="1"/>
</dbReference>
<dbReference type="HAMAP" id="MF_01659">
    <property type="entry name" value="MenD"/>
    <property type="match status" value="1"/>
</dbReference>
<dbReference type="InterPro" id="IPR029035">
    <property type="entry name" value="DHS-like_NAD/FAD-binding_dom"/>
</dbReference>
<dbReference type="InterPro" id="IPR004433">
    <property type="entry name" value="MenaQ_synth_MenD"/>
</dbReference>
<dbReference type="InterPro" id="IPR032264">
    <property type="entry name" value="MenD_middle"/>
</dbReference>
<dbReference type="InterPro" id="IPR029061">
    <property type="entry name" value="THDP-binding"/>
</dbReference>
<dbReference type="InterPro" id="IPR012001">
    <property type="entry name" value="Thiamin_PyroP_enz_TPP-bd_dom"/>
</dbReference>
<dbReference type="InterPro" id="IPR011766">
    <property type="entry name" value="TPP_enzyme_TPP-bd"/>
</dbReference>
<dbReference type="NCBIfam" id="TIGR00173">
    <property type="entry name" value="menD"/>
    <property type="match status" value="1"/>
</dbReference>
<dbReference type="PANTHER" id="PTHR42916">
    <property type="entry name" value="2-SUCCINYL-5-ENOLPYRUVYL-6-HYDROXY-3-CYCLOHEXENE-1-CARBOXYLATE SYNTHASE"/>
    <property type="match status" value="1"/>
</dbReference>
<dbReference type="PANTHER" id="PTHR42916:SF1">
    <property type="entry name" value="PROTEIN PHYLLO, CHLOROPLASTIC"/>
    <property type="match status" value="1"/>
</dbReference>
<dbReference type="Pfam" id="PF02775">
    <property type="entry name" value="TPP_enzyme_C"/>
    <property type="match status" value="1"/>
</dbReference>
<dbReference type="Pfam" id="PF16582">
    <property type="entry name" value="TPP_enzyme_M_2"/>
    <property type="match status" value="1"/>
</dbReference>
<dbReference type="Pfam" id="PF02776">
    <property type="entry name" value="TPP_enzyme_N"/>
    <property type="match status" value="1"/>
</dbReference>
<dbReference type="PIRSF" id="PIRSF004983">
    <property type="entry name" value="MenD"/>
    <property type="match status" value="1"/>
</dbReference>
<dbReference type="SUPFAM" id="SSF52467">
    <property type="entry name" value="DHS-like NAD/FAD-binding domain"/>
    <property type="match status" value="1"/>
</dbReference>
<dbReference type="SUPFAM" id="SSF52518">
    <property type="entry name" value="Thiamin diphosphate-binding fold (THDP-binding)"/>
    <property type="match status" value="2"/>
</dbReference>
<organism>
    <name type="scientific">Bacillus thuringiensis (strain Al Hakam)</name>
    <dbReference type="NCBI Taxonomy" id="412694"/>
    <lineage>
        <taxon>Bacteria</taxon>
        <taxon>Bacillati</taxon>
        <taxon>Bacillota</taxon>
        <taxon>Bacilli</taxon>
        <taxon>Bacillales</taxon>
        <taxon>Bacillaceae</taxon>
        <taxon>Bacillus</taxon>
        <taxon>Bacillus cereus group</taxon>
    </lineage>
</organism>
<gene>
    <name evidence="1" type="primary">menD</name>
    <name type="ordered locus">BALH_4421</name>
</gene>
<comment type="function">
    <text evidence="1">Catalyzes the thiamine diphosphate-dependent decarboxylation of 2-oxoglutarate and the subsequent addition of the resulting succinic semialdehyde-thiamine pyrophosphate anion to isochorismate to yield 2-succinyl-5-enolpyruvyl-6-hydroxy-3-cyclohexene-1-carboxylate (SEPHCHC).</text>
</comment>
<comment type="catalytic activity">
    <reaction evidence="1">
        <text>isochorismate + 2-oxoglutarate + H(+) = 5-enolpyruvoyl-6-hydroxy-2-succinyl-cyclohex-3-ene-1-carboxylate + CO2</text>
        <dbReference type="Rhea" id="RHEA:25593"/>
        <dbReference type="ChEBI" id="CHEBI:15378"/>
        <dbReference type="ChEBI" id="CHEBI:16526"/>
        <dbReference type="ChEBI" id="CHEBI:16810"/>
        <dbReference type="ChEBI" id="CHEBI:29780"/>
        <dbReference type="ChEBI" id="CHEBI:58818"/>
        <dbReference type="EC" id="2.2.1.9"/>
    </reaction>
</comment>
<comment type="cofactor">
    <cofactor evidence="1">
        <name>Mg(2+)</name>
        <dbReference type="ChEBI" id="CHEBI:18420"/>
    </cofactor>
    <cofactor evidence="1">
        <name>Mn(2+)</name>
        <dbReference type="ChEBI" id="CHEBI:29035"/>
    </cofactor>
</comment>
<comment type="cofactor">
    <cofactor evidence="1">
        <name>thiamine diphosphate</name>
        <dbReference type="ChEBI" id="CHEBI:58937"/>
    </cofactor>
    <text evidence="1">Binds 1 thiamine pyrophosphate per subunit.</text>
</comment>
<comment type="pathway">
    <text evidence="1">Quinol/quinone metabolism; 1,4-dihydroxy-2-naphthoate biosynthesis; 1,4-dihydroxy-2-naphthoate from chorismate: step 2/7.</text>
</comment>
<comment type="pathway">
    <text evidence="1">Quinol/quinone metabolism; menaquinone biosynthesis.</text>
</comment>
<comment type="subunit">
    <text evidence="1">Homodimer.</text>
</comment>
<comment type="similarity">
    <text evidence="1">Belongs to the TPP enzyme family. MenD subfamily.</text>
</comment>
<proteinExistence type="inferred from homology"/>
<protein>
    <recommendedName>
        <fullName evidence="1">2-succinyl-5-enolpyruvyl-6-hydroxy-3-cyclohexene-1-carboxylate synthase</fullName>
        <shortName evidence="1">SEPHCHC synthase</shortName>
        <ecNumber evidence="1">2.2.1.9</ecNumber>
    </recommendedName>
    <alternativeName>
        <fullName evidence="1">Menaquinone biosynthesis protein MenD</fullName>
    </alternativeName>
</protein>
<evidence type="ECO:0000255" key="1">
    <source>
        <dbReference type="HAMAP-Rule" id="MF_01659"/>
    </source>
</evidence>
<name>MEND_BACAH</name>